<accession>Q6FRT5</accession>
<evidence type="ECO:0000255" key="1"/>
<evidence type="ECO:0000255" key="2">
    <source>
        <dbReference type="PROSITE-ProRule" id="PRU00498"/>
    </source>
</evidence>
<evidence type="ECO:0000256" key="3">
    <source>
        <dbReference type="SAM" id="MobiDB-lite"/>
    </source>
</evidence>
<evidence type="ECO:0000269" key="4">
    <source>
    </source>
</evidence>
<evidence type="ECO:0000303" key="5">
    <source>
    </source>
</evidence>
<evidence type="ECO:0000305" key="6"/>
<reference key="1">
    <citation type="journal article" date="2004" name="Nature">
        <title>Genome evolution in yeasts.</title>
        <authorList>
            <person name="Dujon B."/>
            <person name="Sherman D."/>
            <person name="Fischer G."/>
            <person name="Durrens P."/>
            <person name="Casaregola S."/>
            <person name="Lafontaine I."/>
            <person name="de Montigny J."/>
            <person name="Marck C."/>
            <person name="Neuveglise C."/>
            <person name="Talla E."/>
            <person name="Goffard N."/>
            <person name="Frangeul L."/>
            <person name="Aigle M."/>
            <person name="Anthouard V."/>
            <person name="Babour A."/>
            <person name="Barbe V."/>
            <person name="Barnay S."/>
            <person name="Blanchin S."/>
            <person name="Beckerich J.-M."/>
            <person name="Beyne E."/>
            <person name="Bleykasten C."/>
            <person name="Boisrame A."/>
            <person name="Boyer J."/>
            <person name="Cattolico L."/>
            <person name="Confanioleri F."/>
            <person name="de Daruvar A."/>
            <person name="Despons L."/>
            <person name="Fabre E."/>
            <person name="Fairhead C."/>
            <person name="Ferry-Dumazet H."/>
            <person name="Groppi A."/>
            <person name="Hantraye F."/>
            <person name="Hennequin C."/>
            <person name="Jauniaux N."/>
            <person name="Joyet P."/>
            <person name="Kachouri R."/>
            <person name="Kerrest A."/>
            <person name="Koszul R."/>
            <person name="Lemaire M."/>
            <person name="Lesur I."/>
            <person name="Ma L."/>
            <person name="Muller H."/>
            <person name="Nicaud J.-M."/>
            <person name="Nikolski M."/>
            <person name="Oztas S."/>
            <person name="Ozier-Kalogeropoulos O."/>
            <person name="Pellenz S."/>
            <person name="Potier S."/>
            <person name="Richard G.-F."/>
            <person name="Straub M.-L."/>
            <person name="Suleau A."/>
            <person name="Swennen D."/>
            <person name="Tekaia F."/>
            <person name="Wesolowski-Louvel M."/>
            <person name="Westhof E."/>
            <person name="Wirth B."/>
            <person name="Zeniou-Meyer M."/>
            <person name="Zivanovic Y."/>
            <person name="Bolotin-Fukuhara M."/>
            <person name="Thierry A."/>
            <person name="Bouchier C."/>
            <person name="Caudron B."/>
            <person name="Scarpelli C."/>
            <person name="Gaillardin C."/>
            <person name="Weissenbach J."/>
            <person name="Wincker P."/>
            <person name="Souciet J.-L."/>
        </authorList>
    </citation>
    <scope>NUCLEOTIDE SEQUENCE [LARGE SCALE GENOMIC DNA]</scope>
    <source>
        <strain>ATCC 2001 / BCRC 20586 / JCM 3761 / NBRC 0622 / NRRL Y-65 / CBS 138</strain>
    </source>
</reference>
<reference key="2">
    <citation type="journal article" date="2016" name="Front. Microbiol.">
        <title>Membrane Proteomics analysis of the Candida glabrata response to 5-flucytosine: unveiling the role and regulation of the drug efflux transporters CgFlr1 and CgFlr2.</title>
        <authorList>
            <person name="Pais P."/>
            <person name="Pires C."/>
            <person name="Costa C."/>
            <person name="Okamoto M."/>
            <person name="Chibana H."/>
            <person name="Teixeira M.C."/>
        </authorList>
    </citation>
    <scope>DISRUPTION PHENOTYPE</scope>
    <scope>FUNCTION</scope>
    <scope>INDUCTION</scope>
    <scope>SUBCELLULAR LOCATION</scope>
</reference>
<dbReference type="EMBL" id="CR380954">
    <property type="protein sequence ID" value="CAG59992.1"/>
    <property type="molecule type" value="Genomic_DNA"/>
</dbReference>
<dbReference type="RefSeq" id="XP_447059.1">
    <property type="nucleotide sequence ID" value="XM_447059.1"/>
</dbReference>
<dbReference type="FunCoup" id="Q6FRT5">
    <property type="interactions" value="20"/>
</dbReference>
<dbReference type="STRING" id="284593.Q6FRT5"/>
<dbReference type="GlyCosmos" id="Q6FRT5">
    <property type="glycosylation" value="2 sites, No reported glycans"/>
</dbReference>
<dbReference type="EnsemblFungi" id="CAGL0H06039g-T">
    <property type="protein sequence ID" value="CAGL0H06039g-T-p1"/>
    <property type="gene ID" value="CAGL0H06039g"/>
</dbReference>
<dbReference type="GeneID" id="2888685"/>
<dbReference type="KEGG" id="cgr:2888685"/>
<dbReference type="CGD" id="CAL0130474">
    <property type="gene designation" value="FLR2"/>
</dbReference>
<dbReference type="VEuPathDB" id="FungiDB:CAGL0H06039g"/>
<dbReference type="eggNOG" id="KOG0255">
    <property type="taxonomic scope" value="Eukaryota"/>
</dbReference>
<dbReference type="HOGENOM" id="CLU_008455_11_1_1"/>
<dbReference type="InParanoid" id="Q6FRT5"/>
<dbReference type="OMA" id="CYQAHAY"/>
<dbReference type="Proteomes" id="UP000002428">
    <property type="component" value="Chromosome H"/>
</dbReference>
<dbReference type="GO" id="GO:0005886">
    <property type="term" value="C:plasma membrane"/>
    <property type="evidence" value="ECO:0000314"/>
    <property type="project" value="CGD"/>
</dbReference>
<dbReference type="GO" id="GO:0015244">
    <property type="term" value="F:fluconazole transmembrane transporter activity"/>
    <property type="evidence" value="ECO:0007669"/>
    <property type="project" value="TreeGrafter"/>
</dbReference>
<dbReference type="GO" id="GO:0042910">
    <property type="term" value="F:xenobiotic transmembrane transporter activity"/>
    <property type="evidence" value="ECO:0007669"/>
    <property type="project" value="InterPro"/>
</dbReference>
<dbReference type="GO" id="GO:1990961">
    <property type="term" value="P:xenobiotic detoxification by transmembrane export across the plasma membrane"/>
    <property type="evidence" value="ECO:0000315"/>
    <property type="project" value="CGD"/>
</dbReference>
<dbReference type="CDD" id="cd17323">
    <property type="entry name" value="MFS_Tpo1_MDR_like"/>
    <property type="match status" value="1"/>
</dbReference>
<dbReference type="FunFam" id="1.20.1250.20:FF:000011">
    <property type="entry name" value="MFS multidrug transporter, putative"/>
    <property type="match status" value="1"/>
</dbReference>
<dbReference type="Gene3D" id="1.20.1250.20">
    <property type="entry name" value="MFS general substrate transporter like domains"/>
    <property type="match status" value="1"/>
</dbReference>
<dbReference type="InterPro" id="IPR011701">
    <property type="entry name" value="MFS"/>
</dbReference>
<dbReference type="InterPro" id="IPR020846">
    <property type="entry name" value="MFS_dom"/>
</dbReference>
<dbReference type="InterPro" id="IPR036259">
    <property type="entry name" value="MFS_trans_sf"/>
</dbReference>
<dbReference type="InterPro" id="IPR004734">
    <property type="entry name" value="Multidrug-R"/>
</dbReference>
<dbReference type="NCBIfam" id="TIGR00880">
    <property type="entry name" value="2_A_01_02"/>
    <property type="match status" value="1"/>
</dbReference>
<dbReference type="PANTHER" id="PTHR23502:SF23">
    <property type="entry name" value="FLUCONAZOLE RESISTANCE PROTEIN 1"/>
    <property type="match status" value="1"/>
</dbReference>
<dbReference type="PANTHER" id="PTHR23502">
    <property type="entry name" value="MAJOR FACILITATOR SUPERFAMILY"/>
    <property type="match status" value="1"/>
</dbReference>
<dbReference type="Pfam" id="PF07690">
    <property type="entry name" value="MFS_1"/>
    <property type="match status" value="1"/>
</dbReference>
<dbReference type="SUPFAM" id="SSF103473">
    <property type="entry name" value="MFS general substrate transporter"/>
    <property type="match status" value="1"/>
</dbReference>
<dbReference type="PROSITE" id="PS50850">
    <property type="entry name" value="MFS"/>
    <property type="match status" value="1"/>
</dbReference>
<organism>
    <name type="scientific">Candida glabrata (strain ATCC 2001 / BCRC 20586 / JCM 3761 / NBRC 0622 / NRRL Y-65 / CBS 138)</name>
    <name type="common">Yeast</name>
    <name type="synonym">Nakaseomyces glabratus</name>
    <dbReference type="NCBI Taxonomy" id="284593"/>
    <lineage>
        <taxon>Eukaryota</taxon>
        <taxon>Fungi</taxon>
        <taxon>Dikarya</taxon>
        <taxon>Ascomycota</taxon>
        <taxon>Saccharomycotina</taxon>
        <taxon>Saccharomycetes</taxon>
        <taxon>Saccharomycetales</taxon>
        <taxon>Saccharomycetaceae</taxon>
        <taxon>Nakaseomyces</taxon>
    </lineage>
</organism>
<comment type="function">
    <text evidence="4">Multidrug transporter that confers resistance to 5-flucytosine (5-FC) and clotrimazole (PubMed:28066366). Further confers azole drug resistance (PubMed:28066366). Plays direct roles in extrusion of 5-flucytosine and clotrimazole (PubMed:28066366).</text>
</comment>
<comment type="subcellular location">
    <subcellularLocation>
        <location evidence="4">Cell membrane</location>
        <topology evidence="1">Multi-pass membrane protein</topology>
    </subcellularLocation>
</comment>
<comment type="induction">
    <text evidence="4">Expression is regulated by the transcription factors AP1 and PDR1 (PubMed:28066366).</text>
</comment>
<comment type="disruption phenotype">
    <text evidence="4">Increases the intracellular accumulation of 5-flucytosine and clotrimazole (PubMed:28066366).</text>
</comment>
<comment type="similarity">
    <text evidence="6">Belongs to the major facilitator superfamily.</text>
</comment>
<name>FLR2_CANGA</name>
<protein>
    <recommendedName>
        <fullName evidence="5">Multidrug transporter FLR2</fullName>
    </recommendedName>
    <alternativeName>
        <fullName evidence="5">Drug:H(+) antiporter FLR2</fullName>
        <shortName evidence="5">DHA FLR2</shortName>
    </alternativeName>
    <alternativeName>
        <fullName evidence="5">Flucytosine exporter FLR2</fullName>
    </alternativeName>
</protein>
<gene>
    <name evidence="5" type="primary">FLR2</name>
    <name type="ordered locus">CAGL0H06039g</name>
</gene>
<feature type="chain" id="PRO_0000443412" description="Multidrug transporter FLR2">
    <location>
        <begin position="1"/>
        <end position="589"/>
    </location>
</feature>
<feature type="transmembrane region" description="Helical" evidence="1">
    <location>
        <begin position="143"/>
        <end position="163"/>
    </location>
</feature>
<feature type="transmembrane region" description="Helical" evidence="1">
    <location>
        <begin position="179"/>
        <end position="199"/>
    </location>
</feature>
<feature type="transmembrane region" description="Helical" evidence="1">
    <location>
        <begin position="211"/>
        <end position="231"/>
    </location>
</feature>
<feature type="transmembrane region" description="Helical" evidence="1">
    <location>
        <begin position="234"/>
        <end position="254"/>
    </location>
</feature>
<feature type="transmembrane region" description="Helical" evidence="1">
    <location>
        <begin position="275"/>
        <end position="295"/>
    </location>
</feature>
<feature type="transmembrane region" description="Helical" evidence="1">
    <location>
        <begin position="301"/>
        <end position="321"/>
    </location>
</feature>
<feature type="transmembrane region" description="Helical" evidence="1">
    <location>
        <begin position="378"/>
        <end position="398"/>
    </location>
</feature>
<feature type="transmembrane region" description="Helical" evidence="1">
    <location>
        <begin position="417"/>
        <end position="437"/>
    </location>
</feature>
<feature type="transmembrane region" description="Helical" evidence="1">
    <location>
        <begin position="455"/>
        <end position="475"/>
    </location>
</feature>
<feature type="transmembrane region" description="Helical" evidence="1">
    <location>
        <begin position="480"/>
        <end position="500"/>
    </location>
</feature>
<feature type="transmembrane region" description="Helical" evidence="1">
    <location>
        <begin position="516"/>
        <end position="536"/>
    </location>
</feature>
<feature type="transmembrane region" description="Helical" evidence="1">
    <location>
        <begin position="551"/>
        <end position="571"/>
    </location>
</feature>
<feature type="region of interest" description="Disordered" evidence="3">
    <location>
        <begin position="50"/>
        <end position="116"/>
    </location>
</feature>
<feature type="compositionally biased region" description="Low complexity" evidence="3">
    <location>
        <begin position="56"/>
        <end position="73"/>
    </location>
</feature>
<feature type="compositionally biased region" description="Basic and acidic residues" evidence="3">
    <location>
        <begin position="107"/>
        <end position="116"/>
    </location>
</feature>
<feature type="glycosylation site" description="N-linked (GlcNAc...) asparagine" evidence="2">
    <location>
        <position position="57"/>
    </location>
</feature>
<feature type="glycosylation site" description="N-linked (GlcNAc...) asparagine" evidence="2">
    <location>
        <position position="136"/>
    </location>
</feature>
<proteinExistence type="evidence at transcript level"/>
<sequence length="589" mass="65989">MYIGAFQDTLFVDMLEYFGWVTVGKEYLDIYRPNGVPVAPNAVAASISGKEEMKQDNQTSTDSMSTSTQQETDASNEDIERAMDTDNGLDKAMSGGQGVFGTEEDDSSTKDASKPEEADPFLVEFLGEDDPRKPWNWSFSKKTFVIVQLMVLTCINYMGSSIYTPGQEQIQHEFHVGHVVGTLNLSMYVLGYAIGPIIFSPLSEVSSIGRMPLYLWTFILFTILQVACALVRNIAGLVILRFITGILCSPVLATGGASVGDVCFPRYVPRFLGAWAVGAVAAPVMAPILGAAMVVAKDWRWIFWLMLFMCGATLLSIIFFFPETSHECILHRRAKRLRKLTGDDRYYTKKEKQEEALPVSVFIKNTLWRPIKMIALEPIILAFDVYIALCYGAFYLFFEAFPIVFAGIYHFTLVEVGLAFLGFCVGCVFAYTALIIFQEKVIRKKFLEGKFRPELFLILAMCLGWCLPFSLFFFGWTARIHWILPIIAELFFVLSVFNLFQATFSYLAVCYPEYVASVFAGNGLCRGAFAAAFPLFGKAMYDRLSTKKYPVAWGSTLIGFITVVLSLIPFVLYKYGPALRARSRFSPDS</sequence>
<keyword id="KW-1003">Cell membrane</keyword>
<keyword id="KW-0325">Glycoprotein</keyword>
<keyword id="KW-0472">Membrane</keyword>
<keyword id="KW-1185">Reference proteome</keyword>
<keyword id="KW-0812">Transmembrane</keyword>
<keyword id="KW-1133">Transmembrane helix</keyword>
<keyword id="KW-0813">Transport</keyword>